<organism>
    <name type="scientific">Blattella germanica</name>
    <name type="common">German cockroach</name>
    <name type="synonym">Blatta germanica</name>
    <dbReference type="NCBI Taxonomy" id="6973"/>
    <lineage>
        <taxon>Eukaryota</taxon>
        <taxon>Metazoa</taxon>
        <taxon>Ecdysozoa</taxon>
        <taxon>Arthropoda</taxon>
        <taxon>Hexapoda</taxon>
        <taxon>Insecta</taxon>
        <taxon>Pterygota</taxon>
        <taxon>Neoptera</taxon>
        <taxon>Polyneoptera</taxon>
        <taxon>Dictyoptera</taxon>
        <taxon>Blattodea</taxon>
        <taxon>Blaberoidea</taxon>
        <taxon>Blattellidae</taxon>
        <taxon>Blattella</taxon>
    </lineage>
</organism>
<proteinExistence type="evidence at transcript level"/>
<protein>
    <recommendedName>
        <fullName>Cytochrome P450 4c21</fullName>
        <ecNumber>1.14.14.1</ecNumber>
    </recommendedName>
    <alternativeName>
        <fullName>CYPIVC21</fullName>
    </alternativeName>
</protein>
<keyword id="KW-0256">Endoplasmic reticulum</keyword>
<keyword id="KW-0349">Heme</keyword>
<keyword id="KW-0408">Iron</keyword>
<keyword id="KW-0472">Membrane</keyword>
<keyword id="KW-0479">Metal-binding</keyword>
<keyword id="KW-0492">Microsome</keyword>
<keyword id="KW-0503">Monooxygenase</keyword>
<keyword id="KW-0560">Oxidoreductase</keyword>
<reference key="1">
    <citation type="journal article" date="2001" name="Gene">
        <title>CYP9E2, CYP4C21 and related pseudogenes from German cockroaches, Blattella germanica: implications for molecular evolution, expression studies and nomenclature of P450s.</title>
        <authorList>
            <person name="Wen Z."/>
            <person name="Horak C.E."/>
            <person name="Scott J.G."/>
        </authorList>
    </citation>
    <scope>NUCLEOTIDE SEQUENCE [MRNA]</scope>
    <scope>INDUCTION</scope>
</reference>
<evidence type="ECO:0000250" key="1"/>
<evidence type="ECO:0000269" key="2">
    <source>
    </source>
</evidence>
<evidence type="ECO:0000305" key="3"/>
<dbReference type="EC" id="1.14.14.1"/>
<dbReference type="EMBL" id="AF275641">
    <property type="protein sequence ID" value="AAK69411.1"/>
    <property type="molecule type" value="mRNA"/>
</dbReference>
<dbReference type="SMR" id="Q964T1"/>
<dbReference type="GO" id="GO:0005789">
    <property type="term" value="C:endoplasmic reticulum membrane"/>
    <property type="evidence" value="ECO:0007669"/>
    <property type="project" value="UniProtKB-SubCell"/>
</dbReference>
<dbReference type="GO" id="GO:0020037">
    <property type="term" value="F:heme binding"/>
    <property type="evidence" value="ECO:0007669"/>
    <property type="project" value="InterPro"/>
</dbReference>
<dbReference type="GO" id="GO:0005506">
    <property type="term" value="F:iron ion binding"/>
    <property type="evidence" value="ECO:0007669"/>
    <property type="project" value="InterPro"/>
</dbReference>
<dbReference type="GO" id="GO:0016712">
    <property type="term" value="F:oxidoreductase activity, acting on paired donors, with incorporation or reduction of molecular oxygen, reduced flavin or flavoprotein as one donor, and incorporation of one atom of oxygen"/>
    <property type="evidence" value="ECO:0007669"/>
    <property type="project" value="UniProtKB-EC"/>
</dbReference>
<dbReference type="CDD" id="cd20660">
    <property type="entry name" value="CYP4V-like"/>
    <property type="match status" value="1"/>
</dbReference>
<dbReference type="FunFam" id="1.10.630.10:FF:000182">
    <property type="entry name" value="Cytochrome P450 3A4"/>
    <property type="match status" value="1"/>
</dbReference>
<dbReference type="Gene3D" id="1.10.630.10">
    <property type="entry name" value="Cytochrome P450"/>
    <property type="match status" value="1"/>
</dbReference>
<dbReference type="InterPro" id="IPR001128">
    <property type="entry name" value="Cyt_P450"/>
</dbReference>
<dbReference type="InterPro" id="IPR017972">
    <property type="entry name" value="Cyt_P450_CS"/>
</dbReference>
<dbReference type="InterPro" id="IPR002401">
    <property type="entry name" value="Cyt_P450_E_grp-I"/>
</dbReference>
<dbReference type="InterPro" id="IPR036396">
    <property type="entry name" value="Cyt_P450_sf"/>
</dbReference>
<dbReference type="InterPro" id="IPR050196">
    <property type="entry name" value="Cytochrome_P450_Monoox"/>
</dbReference>
<dbReference type="PANTHER" id="PTHR24291:SF189">
    <property type="entry name" value="CYTOCHROME P450 4C3-RELATED"/>
    <property type="match status" value="1"/>
</dbReference>
<dbReference type="PANTHER" id="PTHR24291">
    <property type="entry name" value="CYTOCHROME P450 FAMILY 4"/>
    <property type="match status" value="1"/>
</dbReference>
<dbReference type="Pfam" id="PF00067">
    <property type="entry name" value="p450"/>
    <property type="match status" value="1"/>
</dbReference>
<dbReference type="PRINTS" id="PR00463">
    <property type="entry name" value="EP450I"/>
</dbReference>
<dbReference type="PRINTS" id="PR00385">
    <property type="entry name" value="P450"/>
</dbReference>
<dbReference type="SUPFAM" id="SSF48264">
    <property type="entry name" value="Cytochrome P450"/>
    <property type="match status" value="1"/>
</dbReference>
<dbReference type="PROSITE" id="PS00086">
    <property type="entry name" value="CYTOCHROME_P450"/>
    <property type="match status" value="1"/>
</dbReference>
<comment type="catalytic activity">
    <reaction>
        <text>an organic molecule + reduced [NADPH--hemoprotein reductase] + O2 = an alcohol + oxidized [NADPH--hemoprotein reductase] + H2O + H(+)</text>
        <dbReference type="Rhea" id="RHEA:17149"/>
        <dbReference type="Rhea" id="RHEA-COMP:11964"/>
        <dbReference type="Rhea" id="RHEA-COMP:11965"/>
        <dbReference type="ChEBI" id="CHEBI:15377"/>
        <dbReference type="ChEBI" id="CHEBI:15378"/>
        <dbReference type="ChEBI" id="CHEBI:15379"/>
        <dbReference type="ChEBI" id="CHEBI:30879"/>
        <dbReference type="ChEBI" id="CHEBI:57618"/>
        <dbReference type="ChEBI" id="CHEBI:58210"/>
        <dbReference type="ChEBI" id="CHEBI:142491"/>
        <dbReference type="EC" id="1.14.14.1"/>
    </reaction>
</comment>
<comment type="cofactor">
    <cofactor evidence="1">
        <name>heme</name>
        <dbReference type="ChEBI" id="CHEBI:30413"/>
    </cofactor>
</comment>
<comment type="subcellular location">
    <subcellularLocation>
        <location evidence="3">Endoplasmic reticulum membrane</location>
        <topology evidence="3">Peripheral membrane protein</topology>
    </subcellularLocation>
    <subcellularLocation>
        <location evidence="3">Microsome membrane</location>
        <topology evidence="3">Peripheral membrane protein</topology>
    </subcellularLocation>
</comment>
<comment type="induction">
    <text evidence="2">Expressed at all life stages.</text>
</comment>
<comment type="similarity">
    <text evidence="3">Belongs to the cytochrome P450 family.</text>
</comment>
<name>CP4CU_BLAGE</name>
<accession>Q964T1</accession>
<feature type="chain" id="PRO_0000051824" description="Cytochrome P450 4c21">
    <location>
        <begin position="1"/>
        <end position="501"/>
    </location>
</feature>
<feature type="binding site" description="covalent" evidence="1">
    <location>
        <position position="309"/>
    </location>
    <ligand>
        <name>heme</name>
        <dbReference type="ChEBI" id="CHEBI:30413"/>
    </ligand>
</feature>
<feature type="binding site" description="axial binding residue" evidence="1">
    <location>
        <position position="447"/>
    </location>
    <ligand>
        <name>heme</name>
        <dbReference type="ChEBI" id="CHEBI:30413"/>
    </ligand>
    <ligandPart>
        <name>Fe</name>
        <dbReference type="ChEBI" id="CHEBI:18248"/>
    </ligandPart>
</feature>
<sequence length="501" mass="58297">MDITVFLSLTVVVFLAVIIFYGRNEERKRMLQKIPGAPSLPLIGTALPILYRRKEDRMTWIEEILEKYKPLILWYFGNRPFVNISSPELIEVVLRNTQLIDKAFLYDLFHSWLGTGLLTSSGAKWHQHRKIITPTFHFSILEGFITIFAEKSEILVRKLQKEVGRGPFFIRQYVSNCALDIICETAMGTSVNAQDEGFSEYVTAINKMTDVLSDRMANPLLYPEFIFKLTPYYWTHKKCLKVLNGFVNKIIQERKEERKKSKVTQTSEDADIGKKKRVPFLDTLLDASEDDNKLTDTDILEEVHTFMFEGHDTVSAAMTWLLFELGHHPEIQEEAYKEVQDIFQGSDRVPTMADLNNMNYLERVIKESLRLHPSVIYFVREAHQDFELGGYTIPAGTNIDFSVPFIHRNPEIFPNPRCFNPDNFLPDRVVNRHPYAYIPFSAGPRNCIGQRFALLEEKVVLSYLLRHYRFRTVNKREDSKFKLEMINTPVKPIQLIIEARN</sequence>
<gene>
    <name type="primary">CYP4C21</name>
</gene>